<feature type="chain" id="PRO_0000330314" description="Rho GTPase-activating protein 45">
    <location>
        <begin position="1"/>
        <end position="1116"/>
    </location>
</feature>
<feature type="domain" description="F-BAR" evidence="5">
    <location>
        <begin position="268"/>
        <end position="538"/>
    </location>
</feature>
<feature type="domain" description="Rho-GAP" evidence="3">
    <location>
        <begin position="758"/>
        <end position="971"/>
    </location>
</feature>
<feature type="zinc finger region" description="Phorbol-ester/DAG-type" evidence="4">
    <location>
        <begin position="699"/>
        <end position="744"/>
    </location>
</feature>
<feature type="region of interest" description="Disordered" evidence="6">
    <location>
        <begin position="1"/>
        <end position="72"/>
    </location>
</feature>
<feature type="region of interest" description="Disordered" evidence="6">
    <location>
        <begin position="422"/>
        <end position="457"/>
    </location>
</feature>
<feature type="region of interest" description="Disordered" evidence="6">
    <location>
        <begin position="569"/>
        <end position="658"/>
    </location>
</feature>
<feature type="region of interest" description="Disordered" evidence="6">
    <location>
        <begin position="1004"/>
        <end position="1035"/>
    </location>
</feature>
<feature type="region of interest" description="Disordered" evidence="6">
    <location>
        <begin position="1050"/>
        <end position="1116"/>
    </location>
</feature>
<feature type="coiled-coil region" evidence="2">
    <location>
        <begin position="375"/>
        <end position="498"/>
    </location>
</feature>
<feature type="compositionally biased region" description="Polar residues" evidence="6">
    <location>
        <begin position="22"/>
        <end position="31"/>
    </location>
</feature>
<feature type="compositionally biased region" description="Basic and acidic residues" evidence="6">
    <location>
        <begin position="448"/>
        <end position="457"/>
    </location>
</feature>
<feature type="compositionally biased region" description="Polar residues" evidence="6">
    <location>
        <begin position="621"/>
        <end position="635"/>
    </location>
</feature>
<feature type="compositionally biased region" description="Low complexity" evidence="6">
    <location>
        <begin position="643"/>
        <end position="652"/>
    </location>
</feature>
<feature type="compositionally biased region" description="Polar residues" evidence="6">
    <location>
        <begin position="1080"/>
        <end position="1090"/>
    </location>
</feature>
<feature type="compositionally biased region" description="Polar residues" evidence="6">
    <location>
        <begin position="1105"/>
        <end position="1116"/>
    </location>
</feature>
<feature type="site" description="Arginine finger; crucial for GTP hydrolysis by stabilizing the transition state" evidence="3">
    <location>
        <position position="794"/>
    </location>
</feature>
<feature type="modified residue" description="Phosphoserine" evidence="11 13">
    <location>
        <position position="23"/>
    </location>
</feature>
<feature type="modified residue" description="Phosphoserine" evidence="1">
    <location>
        <position position="72"/>
    </location>
</feature>
<feature type="modified residue" description="Phosphoserine" evidence="1">
    <location>
        <position position="92"/>
    </location>
</feature>
<feature type="modified residue" description="Phosphoserine" evidence="1">
    <location>
        <position position="98"/>
    </location>
</feature>
<feature type="modified residue" description="Phosphoserine" evidence="13">
    <location>
        <position position="568"/>
    </location>
</feature>
<feature type="modified residue" description="Phosphoserine" evidence="11 12 13">
    <location>
        <position position="577"/>
    </location>
</feature>
<feature type="modified residue" description="Phosphoserine" evidence="13">
    <location>
        <position position="591"/>
    </location>
</feature>
<feature type="modified residue" description="Phosphoserine" evidence="13">
    <location>
        <position position="618"/>
    </location>
</feature>
<feature type="modified residue" description="Phosphoserine" evidence="1">
    <location>
        <position position="946"/>
    </location>
</feature>
<feature type="modified residue" description="Phosphoserine" evidence="11 12 13">
    <location>
        <position position="1017"/>
    </location>
</feature>
<feature type="modified residue" description="Phosphoserine" evidence="11 12 13">
    <location>
        <position position="1020"/>
    </location>
</feature>
<feature type="modified residue" description="Phosphoserine" evidence="11 12 13">
    <location>
        <position position="1022"/>
    </location>
</feature>
<feature type="splice variant" id="VSP_033029" description="In isoform 4." evidence="8">
    <location>
        <begin position="1"/>
        <end position="461"/>
    </location>
</feature>
<feature type="splice variant" id="VSP_033030" description="In isoform 3." evidence="8">
    <location>
        <begin position="1"/>
        <end position="309"/>
    </location>
</feature>
<feature type="splice variant" id="VSP_033031" description="In isoform 2." evidence="7 8">
    <location>
        <begin position="1"/>
        <end position="116"/>
    </location>
</feature>
<feature type="splice variant" id="VSP_033032" description="In isoform 2." evidence="7 8">
    <original>TLLADVARFAEGLEKLKECVLQD</original>
    <variation>MCVCGTLHPALDHDPLCCQTRAR</variation>
    <location>
        <begin position="117"/>
        <end position="139"/>
    </location>
</feature>
<feature type="sequence conflict" description="In Ref. 1; BAE34889/BAE41670." evidence="9" ref="1">
    <original>V</original>
    <variation>G</variation>
    <location>
        <position position="87"/>
    </location>
</feature>
<feature type="sequence conflict" description="In Ref. 1; BAE21986." evidence="9" ref="1">
    <original>E</original>
    <variation>K</variation>
    <location>
        <position position="587"/>
    </location>
</feature>
<feature type="sequence conflict" description="In Ref. 1; BAE34889." evidence="9" ref="1">
    <original>K</original>
    <variation>E</variation>
    <location>
        <position position="710"/>
    </location>
</feature>
<feature type="sequence conflict" description="In Ref. 1; BAB31085." evidence="9" ref="1">
    <original>P</original>
    <variation>H</variation>
    <location>
        <position position="979"/>
    </location>
</feature>
<feature type="sequence conflict" description="In Ref. 1; BAE41670/BAE42381." evidence="9" ref="1">
    <original>Q</original>
    <variation>R</variation>
    <location>
        <position position="1047"/>
    </location>
</feature>
<gene>
    <name evidence="10" type="primary">Arhgap45</name>
    <name evidence="10" type="synonym">Hmha1</name>
</gene>
<sequence>MFSRKKRELMKTPSISKKNRAGSPNPQSSSGELPRKDWTEAPGLEPPATSLSTVAKGTGTLKRPTSLSRHASAAGFPLSGTATWTLVRGYRSPLSAASPAELPTEGAFPDGVEDISTLLADVARFAEGLEKLKECVLQDDLLEARRPLAHECLGEALRVMRQVISRYPLLNTVETLTAAGTLIAKVKAFHYECNNESDKREFEKALETIAVSFSCTVSEFLLGEVDSSTLLAVPPGDPSQSMENLYGAGTEGPPHNVEECEEGCLPPEEVDMLLQRCEGGVDAALQYAKDMARYMKDLISYLEKRTTLEMEFAKGLQKVVHNCRQSVTHEPHMPLLSIYSLALEQDLEFGHGMVQAAGTLQTQTFMQPLTLRRLEHERRRKEIKESWHRAQRKLQEAEANLRKAKQGYKQRCEDHDKARLQVAKAEEEQQGTGPGAGTAASKALDKRRRLEEEAKNKAEEAMATYRTCVADAKTQKQELEDTKVTALRQIQEVIRQSDQTIKSATISYYQLMHMQTAPLPVNFQMLCESSKLYDPGQQYASHVRQLQRGEEPDVRYDFEPYVSNNSWSPIMRTRKGSFNPGDASGPEAAGSPPEEGGTSEAAPNKDHRGGRGHQVHKSWPISISDTEVGLDTSSGDLKKFDRTSSSGTMSSSEELGDQEAGLVASAFDSADLNGMDPELPVAMPSGPFRHVGLSKAARTHRLRKLRTPAKCRECNSYVYFQGAECEECCLACHKKCLETLAIQCGHKKLQGRLQLFGQDFSQAALSTPDGVPFIVKKCVCEIERRALHTKGIYRVNGVKTRVEKLCQAFENGKELVELSQASPHDISNVLKLYLRQLPEPLISFRFYHELVGLAKDSLKAEAEAKAASRGRQGGSESEAATLAMVGRLRELMQDLPAENRATLLYLLKHLRRIVEMEQDNKMTPGNLGIVFGPTLLRPRPTDATVSLSSLVDYPHQARVIETLIVHYGLVFEEEPEEAPGSQEGASTQCGQLESAEGIVFPLQEEAEDGSRESHAASNDSDSELEDASDPLSSSDASALHRLSFLEQTEAGLEEGPQSHSGSEEQLEGEDGAPGPWLCHFNTNQSNNTSRAPLPTMRLRGGQITGGTSQERQPQFV</sequence>
<proteinExistence type="evidence at protein level"/>
<protein>
    <recommendedName>
        <fullName evidence="10">Rho GTPase-activating protein 45</fullName>
    </recommendedName>
    <alternativeName>
        <fullName>Minor histocompatibility protein HA-1</fullName>
    </alternativeName>
</protein>
<evidence type="ECO:0000250" key="1">
    <source>
        <dbReference type="UniProtKB" id="Q92619"/>
    </source>
</evidence>
<evidence type="ECO:0000255" key="2"/>
<evidence type="ECO:0000255" key="3">
    <source>
        <dbReference type="PROSITE-ProRule" id="PRU00172"/>
    </source>
</evidence>
<evidence type="ECO:0000255" key="4">
    <source>
        <dbReference type="PROSITE-ProRule" id="PRU00226"/>
    </source>
</evidence>
<evidence type="ECO:0000255" key="5">
    <source>
        <dbReference type="PROSITE-ProRule" id="PRU01077"/>
    </source>
</evidence>
<evidence type="ECO:0000256" key="6">
    <source>
        <dbReference type="SAM" id="MobiDB-lite"/>
    </source>
</evidence>
<evidence type="ECO:0000303" key="7">
    <source>
    </source>
</evidence>
<evidence type="ECO:0000303" key="8">
    <source>
    </source>
</evidence>
<evidence type="ECO:0000305" key="9"/>
<evidence type="ECO:0000312" key="10">
    <source>
        <dbReference type="MGI" id="MGI:1917969"/>
    </source>
</evidence>
<evidence type="ECO:0007744" key="11">
    <source>
    </source>
</evidence>
<evidence type="ECO:0007744" key="12">
    <source>
    </source>
</evidence>
<evidence type="ECO:0007744" key="13">
    <source>
    </source>
</evidence>
<dbReference type="EMBL" id="AK018130">
    <property type="protein sequence ID" value="BAB31085.1"/>
    <property type="molecule type" value="mRNA"/>
</dbReference>
<dbReference type="EMBL" id="AK044860">
    <property type="protein sequence ID" value="BAC32124.1"/>
    <property type="molecule type" value="mRNA"/>
</dbReference>
<dbReference type="EMBL" id="AK134029">
    <property type="protein sequence ID" value="BAE21986.1"/>
    <property type="molecule type" value="mRNA"/>
</dbReference>
<dbReference type="EMBL" id="AK159194">
    <property type="protein sequence ID" value="BAE34889.1"/>
    <property type="molecule type" value="mRNA"/>
</dbReference>
<dbReference type="EMBL" id="AK161766">
    <property type="protein sequence ID" value="BAE36565.1"/>
    <property type="molecule type" value="mRNA"/>
</dbReference>
<dbReference type="EMBL" id="AK170262">
    <property type="protein sequence ID" value="BAE41670.1"/>
    <property type="molecule type" value="mRNA"/>
</dbReference>
<dbReference type="EMBL" id="AK171304">
    <property type="protein sequence ID" value="BAE42381.1"/>
    <property type="molecule type" value="mRNA"/>
</dbReference>
<dbReference type="EMBL" id="BC053750">
    <property type="protein sequence ID" value="AAH53750.1"/>
    <property type="molecule type" value="mRNA"/>
</dbReference>
<dbReference type="CCDS" id="CCDS24005.1">
    <molecule id="Q3TBD2-2"/>
</dbReference>
<dbReference type="CCDS" id="CCDS48624.1">
    <molecule id="Q3TBD2-1"/>
</dbReference>
<dbReference type="RefSeq" id="NP_001136173.1">
    <property type="nucleotide sequence ID" value="NM_001142701.1"/>
</dbReference>
<dbReference type="RefSeq" id="NP_001334003.1">
    <property type="nucleotide sequence ID" value="NM_001347074.1"/>
</dbReference>
<dbReference type="RefSeq" id="NP_081797.1">
    <molecule id="Q3TBD2-2"/>
    <property type="nucleotide sequence ID" value="NM_027521.3"/>
</dbReference>
<dbReference type="SMR" id="Q3TBD2"/>
<dbReference type="BioGRID" id="214219">
    <property type="interactions" value="3"/>
</dbReference>
<dbReference type="FunCoup" id="Q3TBD2">
    <property type="interactions" value="637"/>
</dbReference>
<dbReference type="IntAct" id="Q3TBD2">
    <property type="interactions" value="3"/>
</dbReference>
<dbReference type="STRING" id="10090.ENSMUSP00000101012"/>
<dbReference type="GlyGen" id="Q3TBD2">
    <property type="glycosylation" value="1 site, 1 O-linked glycan (1 site)"/>
</dbReference>
<dbReference type="iPTMnet" id="Q3TBD2"/>
<dbReference type="PhosphoSitePlus" id="Q3TBD2"/>
<dbReference type="jPOST" id="Q3TBD2"/>
<dbReference type="PaxDb" id="10090-ENSMUSP00000097100"/>
<dbReference type="PeptideAtlas" id="Q3TBD2"/>
<dbReference type="ProteomicsDB" id="273117">
    <molecule id="Q3TBD2-1"/>
</dbReference>
<dbReference type="ProteomicsDB" id="273118">
    <molecule id="Q3TBD2-2"/>
</dbReference>
<dbReference type="ProteomicsDB" id="273119">
    <molecule id="Q3TBD2-3"/>
</dbReference>
<dbReference type="ProteomicsDB" id="273120">
    <molecule id="Q3TBD2-4"/>
</dbReference>
<dbReference type="Antibodypedia" id="10356">
    <property type="antibodies" value="185 antibodies from 32 providers"/>
</dbReference>
<dbReference type="DNASU" id="70719"/>
<dbReference type="Ensembl" id="ENSMUST00000043311.7">
    <molecule id="Q3TBD2-2"/>
    <property type="protein sequence ID" value="ENSMUSP00000041019.7"/>
    <property type="gene ID" value="ENSMUSG00000035697.15"/>
</dbReference>
<dbReference type="GeneID" id="70719"/>
<dbReference type="KEGG" id="mmu:70719"/>
<dbReference type="UCSC" id="uc007gbe.2">
    <molecule id="Q3TBD2-1"/>
    <property type="organism name" value="mouse"/>
</dbReference>
<dbReference type="UCSC" id="uc007gbg.2">
    <molecule id="Q3TBD2-2"/>
    <property type="organism name" value="mouse"/>
</dbReference>
<dbReference type="AGR" id="MGI:1917969"/>
<dbReference type="CTD" id="23526"/>
<dbReference type="MGI" id="MGI:1917969">
    <property type="gene designation" value="Arhgap45"/>
</dbReference>
<dbReference type="VEuPathDB" id="HostDB:ENSMUSG00000035697"/>
<dbReference type="eggNOG" id="KOG1453">
    <property type="taxonomic scope" value="Eukaryota"/>
</dbReference>
<dbReference type="GeneTree" id="ENSGT00950000183110"/>
<dbReference type="InParanoid" id="Q3TBD2"/>
<dbReference type="OrthoDB" id="79452at2759"/>
<dbReference type="PhylomeDB" id="Q3TBD2"/>
<dbReference type="Reactome" id="R-MMU-6798695">
    <property type="pathway name" value="Neutrophil degranulation"/>
</dbReference>
<dbReference type="Reactome" id="R-MMU-8980692">
    <property type="pathway name" value="RHOA GTPase cycle"/>
</dbReference>
<dbReference type="Reactome" id="R-MMU-9013148">
    <property type="pathway name" value="CDC42 GTPase cycle"/>
</dbReference>
<dbReference type="Reactome" id="R-MMU-9013149">
    <property type="pathway name" value="RAC1 GTPase cycle"/>
</dbReference>
<dbReference type="BioGRID-ORCS" id="70719">
    <property type="hits" value="1 hit in 76 CRISPR screens"/>
</dbReference>
<dbReference type="ChiTaRS" id="Arhgap45">
    <property type="organism name" value="mouse"/>
</dbReference>
<dbReference type="PRO" id="PR:Q3TBD2"/>
<dbReference type="Proteomes" id="UP000000589">
    <property type="component" value="Chromosome 10"/>
</dbReference>
<dbReference type="RNAct" id="Q3TBD2">
    <property type="molecule type" value="protein"/>
</dbReference>
<dbReference type="Bgee" id="ENSMUSG00000035697">
    <property type="expression patterns" value="Expressed in granulocyte and 113 other cell types or tissues"/>
</dbReference>
<dbReference type="ExpressionAtlas" id="Q3TBD2">
    <property type="expression patterns" value="baseline and differential"/>
</dbReference>
<dbReference type="GO" id="GO:0005737">
    <property type="term" value="C:cytoplasm"/>
    <property type="evidence" value="ECO:0007669"/>
    <property type="project" value="UniProtKB-SubCell"/>
</dbReference>
<dbReference type="GO" id="GO:0032587">
    <property type="term" value="C:ruffle membrane"/>
    <property type="evidence" value="ECO:0007669"/>
    <property type="project" value="UniProtKB-SubCell"/>
</dbReference>
<dbReference type="GO" id="GO:0005096">
    <property type="term" value="F:GTPase activator activity"/>
    <property type="evidence" value="ECO:0007669"/>
    <property type="project" value="UniProtKB-KW"/>
</dbReference>
<dbReference type="GO" id="GO:0008270">
    <property type="term" value="F:zinc ion binding"/>
    <property type="evidence" value="ECO:0007669"/>
    <property type="project" value="UniProtKB-KW"/>
</dbReference>
<dbReference type="GO" id="GO:0051056">
    <property type="term" value="P:regulation of small GTPase mediated signal transduction"/>
    <property type="evidence" value="ECO:0007669"/>
    <property type="project" value="UniProtKB-ARBA"/>
</dbReference>
<dbReference type="GO" id="GO:0007165">
    <property type="term" value="P:signal transduction"/>
    <property type="evidence" value="ECO:0007669"/>
    <property type="project" value="InterPro"/>
</dbReference>
<dbReference type="CDD" id="cd20816">
    <property type="entry name" value="C1_GMIP-like"/>
    <property type="match status" value="1"/>
</dbReference>
<dbReference type="FunFam" id="1.10.555.10:FF:000016">
    <property type="entry name" value="Rho GTPase activating protein 29"/>
    <property type="match status" value="1"/>
</dbReference>
<dbReference type="Gene3D" id="1.20.1270.60">
    <property type="entry name" value="Arfaptin homology (AH) domain/BAR domain"/>
    <property type="match status" value="1"/>
</dbReference>
<dbReference type="Gene3D" id="1.10.555.10">
    <property type="entry name" value="Rho GTPase activation protein"/>
    <property type="match status" value="1"/>
</dbReference>
<dbReference type="InterPro" id="IPR027267">
    <property type="entry name" value="AH/BAR_dom_sf"/>
</dbReference>
<dbReference type="InterPro" id="IPR046349">
    <property type="entry name" value="C1-like_sf"/>
</dbReference>
<dbReference type="InterPro" id="IPR031160">
    <property type="entry name" value="F_BAR"/>
</dbReference>
<dbReference type="InterPro" id="IPR001060">
    <property type="entry name" value="FCH_dom"/>
</dbReference>
<dbReference type="InterPro" id="IPR054713">
    <property type="entry name" value="GMIP/FCHO2-like_FCH"/>
</dbReference>
<dbReference type="InterPro" id="IPR002219">
    <property type="entry name" value="PE/DAG-bd"/>
</dbReference>
<dbReference type="InterPro" id="IPR057028">
    <property type="entry name" value="RHG29_45_N"/>
</dbReference>
<dbReference type="InterPro" id="IPR008936">
    <property type="entry name" value="Rho_GTPase_activation_prot"/>
</dbReference>
<dbReference type="InterPro" id="IPR051025">
    <property type="entry name" value="RhoGAP"/>
</dbReference>
<dbReference type="InterPro" id="IPR000198">
    <property type="entry name" value="RhoGAP_dom"/>
</dbReference>
<dbReference type="PANTHER" id="PTHR15228:SF18">
    <property type="entry name" value="RHO GTPASE-ACTIVATING PROTEIN 45"/>
    <property type="match status" value="1"/>
</dbReference>
<dbReference type="PANTHER" id="PTHR15228">
    <property type="entry name" value="SPERMATHECAL PHYSIOLOGY VARIANT"/>
    <property type="match status" value="1"/>
</dbReference>
<dbReference type="Pfam" id="PF22699">
    <property type="entry name" value="GMIP-like_FCH"/>
    <property type="match status" value="1"/>
</dbReference>
<dbReference type="Pfam" id="PF24235">
    <property type="entry name" value="RHG29_45_N"/>
    <property type="match status" value="1"/>
</dbReference>
<dbReference type="Pfam" id="PF00620">
    <property type="entry name" value="RhoGAP"/>
    <property type="match status" value="1"/>
</dbReference>
<dbReference type="SMART" id="SM00109">
    <property type="entry name" value="C1"/>
    <property type="match status" value="1"/>
</dbReference>
<dbReference type="SMART" id="SM00055">
    <property type="entry name" value="FCH"/>
    <property type="match status" value="1"/>
</dbReference>
<dbReference type="SMART" id="SM00324">
    <property type="entry name" value="RhoGAP"/>
    <property type="match status" value="1"/>
</dbReference>
<dbReference type="SUPFAM" id="SSF103657">
    <property type="entry name" value="BAR/IMD domain-like"/>
    <property type="match status" value="1"/>
</dbReference>
<dbReference type="SUPFAM" id="SSF57889">
    <property type="entry name" value="Cysteine-rich domain"/>
    <property type="match status" value="1"/>
</dbReference>
<dbReference type="SUPFAM" id="SSF48350">
    <property type="entry name" value="GTPase activation domain, GAP"/>
    <property type="match status" value="1"/>
</dbReference>
<dbReference type="PROSITE" id="PS51741">
    <property type="entry name" value="F_BAR"/>
    <property type="match status" value="1"/>
</dbReference>
<dbReference type="PROSITE" id="PS50238">
    <property type="entry name" value="RHOGAP"/>
    <property type="match status" value="1"/>
</dbReference>
<dbReference type="PROSITE" id="PS00479">
    <property type="entry name" value="ZF_DAG_PE_1"/>
    <property type="match status" value="1"/>
</dbReference>
<dbReference type="PROSITE" id="PS50081">
    <property type="entry name" value="ZF_DAG_PE_2"/>
    <property type="match status" value="1"/>
</dbReference>
<organism>
    <name type="scientific">Mus musculus</name>
    <name type="common">Mouse</name>
    <dbReference type="NCBI Taxonomy" id="10090"/>
    <lineage>
        <taxon>Eukaryota</taxon>
        <taxon>Metazoa</taxon>
        <taxon>Chordata</taxon>
        <taxon>Craniata</taxon>
        <taxon>Vertebrata</taxon>
        <taxon>Euteleostomi</taxon>
        <taxon>Mammalia</taxon>
        <taxon>Eutheria</taxon>
        <taxon>Euarchontoglires</taxon>
        <taxon>Glires</taxon>
        <taxon>Rodentia</taxon>
        <taxon>Myomorpha</taxon>
        <taxon>Muroidea</taxon>
        <taxon>Muridae</taxon>
        <taxon>Murinae</taxon>
        <taxon>Mus</taxon>
        <taxon>Mus</taxon>
    </lineage>
</organism>
<comment type="function">
    <text evidence="1">Contains a GTPase activator for the Rho-type GTPases (RhoGAP) domain that would be able to negatively regulate the actin cytoskeleton as well as cell spreading. However, also contains N-terminally a BAR-domin which is able to play an autoinhibitory effect on this RhoGAP activity.</text>
</comment>
<comment type="subcellular location">
    <subcellularLocation>
        <location evidence="1">Cytoplasm</location>
    </subcellularLocation>
    <subcellularLocation>
        <location evidence="1">Cell projection</location>
        <location evidence="1">Ruffle membrane</location>
    </subcellularLocation>
</comment>
<comment type="alternative products">
    <event type="alternative splicing"/>
    <isoform>
        <id>Q3TBD2-1</id>
        <name>1</name>
        <sequence type="displayed"/>
    </isoform>
    <isoform>
        <id>Q3TBD2-2</id>
        <name>2</name>
        <sequence type="described" ref="VSP_033031 VSP_033032"/>
    </isoform>
    <isoform>
        <id>Q3TBD2-3</id>
        <name>3</name>
        <sequence type="described" ref="VSP_033030"/>
    </isoform>
    <isoform>
        <id>Q3TBD2-4</id>
        <name>4</name>
        <sequence type="described" ref="VSP_033029"/>
    </isoform>
</comment>
<comment type="domain">
    <text evidence="1">Rho-GAP domain is able to regulate RhoGTPase activity, actin cytoskeleton and cell spreading. However N-terminally BAR domain plays an autoinhibitory role.</text>
</comment>
<name>HMHA1_MOUSE</name>
<keyword id="KW-0025">Alternative splicing</keyword>
<keyword id="KW-1003">Cell membrane</keyword>
<keyword id="KW-0966">Cell projection</keyword>
<keyword id="KW-0175">Coiled coil</keyword>
<keyword id="KW-0963">Cytoplasm</keyword>
<keyword id="KW-0343">GTPase activation</keyword>
<keyword id="KW-0472">Membrane</keyword>
<keyword id="KW-0479">Metal-binding</keyword>
<keyword id="KW-0597">Phosphoprotein</keyword>
<keyword id="KW-1185">Reference proteome</keyword>
<keyword id="KW-0862">Zinc</keyword>
<keyword id="KW-0863">Zinc-finger</keyword>
<accession>Q3TBD2</accession>
<accession>Q3TDD2</accession>
<accession>Q3TSW0</accession>
<accession>Q3TXM6</accession>
<accession>Q3UZ72</accession>
<accession>Q8BI83</accession>
<accession>Q9CU46</accession>
<reference key="1">
    <citation type="journal article" date="2005" name="Science">
        <title>The transcriptional landscape of the mammalian genome.</title>
        <authorList>
            <person name="Carninci P."/>
            <person name="Kasukawa T."/>
            <person name="Katayama S."/>
            <person name="Gough J."/>
            <person name="Frith M.C."/>
            <person name="Maeda N."/>
            <person name="Oyama R."/>
            <person name="Ravasi T."/>
            <person name="Lenhard B."/>
            <person name="Wells C."/>
            <person name="Kodzius R."/>
            <person name="Shimokawa K."/>
            <person name="Bajic V.B."/>
            <person name="Brenner S.E."/>
            <person name="Batalov S."/>
            <person name="Forrest A.R."/>
            <person name="Zavolan M."/>
            <person name="Davis M.J."/>
            <person name="Wilming L.G."/>
            <person name="Aidinis V."/>
            <person name="Allen J.E."/>
            <person name="Ambesi-Impiombato A."/>
            <person name="Apweiler R."/>
            <person name="Aturaliya R.N."/>
            <person name="Bailey T.L."/>
            <person name="Bansal M."/>
            <person name="Baxter L."/>
            <person name="Beisel K.W."/>
            <person name="Bersano T."/>
            <person name="Bono H."/>
            <person name="Chalk A.M."/>
            <person name="Chiu K.P."/>
            <person name="Choudhary V."/>
            <person name="Christoffels A."/>
            <person name="Clutterbuck D.R."/>
            <person name="Crowe M.L."/>
            <person name="Dalla E."/>
            <person name="Dalrymple B.P."/>
            <person name="de Bono B."/>
            <person name="Della Gatta G."/>
            <person name="di Bernardo D."/>
            <person name="Down T."/>
            <person name="Engstrom P."/>
            <person name="Fagiolini M."/>
            <person name="Faulkner G."/>
            <person name="Fletcher C.F."/>
            <person name="Fukushima T."/>
            <person name="Furuno M."/>
            <person name="Futaki S."/>
            <person name="Gariboldi M."/>
            <person name="Georgii-Hemming P."/>
            <person name="Gingeras T.R."/>
            <person name="Gojobori T."/>
            <person name="Green R.E."/>
            <person name="Gustincich S."/>
            <person name="Harbers M."/>
            <person name="Hayashi Y."/>
            <person name="Hensch T.K."/>
            <person name="Hirokawa N."/>
            <person name="Hill D."/>
            <person name="Huminiecki L."/>
            <person name="Iacono M."/>
            <person name="Ikeo K."/>
            <person name="Iwama A."/>
            <person name="Ishikawa T."/>
            <person name="Jakt M."/>
            <person name="Kanapin A."/>
            <person name="Katoh M."/>
            <person name="Kawasawa Y."/>
            <person name="Kelso J."/>
            <person name="Kitamura H."/>
            <person name="Kitano H."/>
            <person name="Kollias G."/>
            <person name="Krishnan S.P."/>
            <person name="Kruger A."/>
            <person name="Kummerfeld S.K."/>
            <person name="Kurochkin I.V."/>
            <person name="Lareau L.F."/>
            <person name="Lazarevic D."/>
            <person name="Lipovich L."/>
            <person name="Liu J."/>
            <person name="Liuni S."/>
            <person name="McWilliam S."/>
            <person name="Madan Babu M."/>
            <person name="Madera M."/>
            <person name="Marchionni L."/>
            <person name="Matsuda H."/>
            <person name="Matsuzawa S."/>
            <person name="Miki H."/>
            <person name="Mignone F."/>
            <person name="Miyake S."/>
            <person name="Morris K."/>
            <person name="Mottagui-Tabar S."/>
            <person name="Mulder N."/>
            <person name="Nakano N."/>
            <person name="Nakauchi H."/>
            <person name="Ng P."/>
            <person name="Nilsson R."/>
            <person name="Nishiguchi S."/>
            <person name="Nishikawa S."/>
            <person name="Nori F."/>
            <person name="Ohara O."/>
            <person name="Okazaki Y."/>
            <person name="Orlando V."/>
            <person name="Pang K.C."/>
            <person name="Pavan W.J."/>
            <person name="Pavesi G."/>
            <person name="Pesole G."/>
            <person name="Petrovsky N."/>
            <person name="Piazza S."/>
            <person name="Reed J."/>
            <person name="Reid J.F."/>
            <person name="Ring B.Z."/>
            <person name="Ringwald M."/>
            <person name="Rost B."/>
            <person name="Ruan Y."/>
            <person name="Salzberg S.L."/>
            <person name="Sandelin A."/>
            <person name="Schneider C."/>
            <person name="Schoenbach C."/>
            <person name="Sekiguchi K."/>
            <person name="Semple C.A."/>
            <person name="Seno S."/>
            <person name="Sessa L."/>
            <person name="Sheng Y."/>
            <person name="Shibata Y."/>
            <person name="Shimada H."/>
            <person name="Shimada K."/>
            <person name="Silva D."/>
            <person name="Sinclair B."/>
            <person name="Sperling S."/>
            <person name="Stupka E."/>
            <person name="Sugiura K."/>
            <person name="Sultana R."/>
            <person name="Takenaka Y."/>
            <person name="Taki K."/>
            <person name="Tammoja K."/>
            <person name="Tan S.L."/>
            <person name="Tang S."/>
            <person name="Taylor M.S."/>
            <person name="Tegner J."/>
            <person name="Teichmann S.A."/>
            <person name="Ueda H.R."/>
            <person name="van Nimwegen E."/>
            <person name="Verardo R."/>
            <person name="Wei C.L."/>
            <person name="Yagi K."/>
            <person name="Yamanishi H."/>
            <person name="Zabarovsky E."/>
            <person name="Zhu S."/>
            <person name="Zimmer A."/>
            <person name="Hide W."/>
            <person name="Bult C."/>
            <person name="Grimmond S.M."/>
            <person name="Teasdale R.D."/>
            <person name="Liu E.T."/>
            <person name="Brusic V."/>
            <person name="Quackenbush J."/>
            <person name="Wahlestedt C."/>
            <person name="Mattick J.S."/>
            <person name="Hume D.A."/>
            <person name="Kai C."/>
            <person name="Sasaki D."/>
            <person name="Tomaru Y."/>
            <person name="Fukuda S."/>
            <person name="Kanamori-Katayama M."/>
            <person name="Suzuki M."/>
            <person name="Aoki J."/>
            <person name="Arakawa T."/>
            <person name="Iida J."/>
            <person name="Imamura K."/>
            <person name="Itoh M."/>
            <person name="Kato T."/>
            <person name="Kawaji H."/>
            <person name="Kawagashira N."/>
            <person name="Kawashima T."/>
            <person name="Kojima M."/>
            <person name="Kondo S."/>
            <person name="Konno H."/>
            <person name="Nakano K."/>
            <person name="Ninomiya N."/>
            <person name="Nishio T."/>
            <person name="Okada M."/>
            <person name="Plessy C."/>
            <person name="Shibata K."/>
            <person name="Shiraki T."/>
            <person name="Suzuki S."/>
            <person name="Tagami M."/>
            <person name="Waki K."/>
            <person name="Watahiki A."/>
            <person name="Okamura-Oho Y."/>
            <person name="Suzuki H."/>
            <person name="Kawai J."/>
            <person name="Hayashizaki Y."/>
        </authorList>
    </citation>
    <scope>NUCLEOTIDE SEQUENCE [LARGE SCALE MRNA] (ISOFORMS 1; 2; 3 AND 4)</scope>
    <source>
        <strain>C57BL/6J</strain>
        <strain>NOD</strain>
        <tissue>Embryo</tissue>
        <tissue>Medulla oblongata</tissue>
        <tissue>Thymus</tissue>
    </source>
</reference>
<reference key="2">
    <citation type="journal article" date="2004" name="Genome Res.">
        <title>The status, quality, and expansion of the NIH full-length cDNA project: the Mammalian Gene Collection (MGC).</title>
        <authorList>
            <consortium name="The MGC Project Team"/>
        </authorList>
    </citation>
    <scope>NUCLEOTIDE SEQUENCE [LARGE SCALE MRNA] (ISOFORM 2)</scope>
    <source>
        <tissue>Embryo</tissue>
    </source>
</reference>
<reference key="3">
    <citation type="journal article" date="2006" name="Tissue Antigens">
        <title>The diallelic locus encoding the minor histocompatibility antigen HA-1 is evolutionarily conserved.</title>
        <authorList>
            <person name="Wieles B."/>
            <person name="Pool J."/>
            <person name="Wilke M."/>
            <person name="Weber M."/>
            <person name="Kolb H.-J."/>
            <person name="Bontrop R.E."/>
            <person name="Goulmy E."/>
        </authorList>
    </citation>
    <scope>FUNCTION</scope>
</reference>
<reference key="4">
    <citation type="journal article" date="2007" name="Proc. Natl. Acad. Sci. U.S.A.">
        <title>Large-scale phosphorylation analysis of mouse liver.</title>
        <authorList>
            <person name="Villen J."/>
            <person name="Beausoleil S.A."/>
            <person name="Gerber S.A."/>
            <person name="Gygi S.P."/>
        </authorList>
    </citation>
    <scope>PHOSPHORYLATION [LARGE SCALE ANALYSIS] AT SER-23; SER-577; SER-1017; SER-1020 AND SER-1022</scope>
    <scope>IDENTIFICATION BY MASS SPECTROMETRY [LARGE SCALE ANALYSIS]</scope>
    <source>
        <tissue>Liver</tissue>
    </source>
</reference>
<reference key="5">
    <citation type="journal article" date="2009" name="Immunity">
        <title>The phagosomal proteome in interferon-gamma-activated macrophages.</title>
        <authorList>
            <person name="Trost M."/>
            <person name="English L."/>
            <person name="Lemieux S."/>
            <person name="Courcelles M."/>
            <person name="Desjardins M."/>
            <person name="Thibault P."/>
        </authorList>
    </citation>
    <scope>PHOSPHORYLATION [LARGE SCALE ANALYSIS] AT SER-577; SER-1017; SER-1020 AND SER-1022</scope>
    <scope>IDENTIFICATION BY MASS SPECTROMETRY [LARGE SCALE ANALYSIS]</scope>
</reference>
<reference key="6">
    <citation type="journal article" date="2010" name="Cell">
        <title>A tissue-specific atlas of mouse protein phosphorylation and expression.</title>
        <authorList>
            <person name="Huttlin E.L."/>
            <person name="Jedrychowski M.P."/>
            <person name="Elias J.E."/>
            <person name="Goswami T."/>
            <person name="Rad R."/>
            <person name="Beausoleil S.A."/>
            <person name="Villen J."/>
            <person name="Haas W."/>
            <person name="Sowa M.E."/>
            <person name="Gygi S.P."/>
        </authorList>
    </citation>
    <scope>PHOSPHORYLATION [LARGE SCALE ANALYSIS] AT SER-23; SER-568; SER-577; SER-591; SER-618; SER-1017; SER-1020 AND SER-1022</scope>
    <scope>IDENTIFICATION BY MASS SPECTROMETRY [LARGE SCALE ANALYSIS]</scope>
    <source>
        <tissue>Brain</tissue>
        <tissue>Heart</tissue>
        <tissue>Kidney</tissue>
        <tissue>Liver</tissue>
        <tissue>Lung</tissue>
        <tissue>Spleen</tissue>
    </source>
</reference>